<evidence type="ECO:0000255" key="1"/>
<evidence type="ECO:0000256" key="2">
    <source>
        <dbReference type="SAM" id="MobiDB-lite"/>
    </source>
</evidence>
<evidence type="ECO:0000305" key="3"/>
<evidence type="ECO:0007744" key="4">
    <source>
    </source>
</evidence>
<dbReference type="EMBL" id="AK082625">
    <property type="status" value="NOT_ANNOTATED_CDS"/>
    <property type="molecule type" value="mRNA"/>
</dbReference>
<dbReference type="EMBL" id="AC167669">
    <property type="status" value="NOT_ANNOTATED_CDS"/>
    <property type="molecule type" value="Genomic_DNA"/>
</dbReference>
<dbReference type="EMBL" id="BC024659">
    <property type="status" value="NOT_ANNOTATED_CDS"/>
    <property type="molecule type" value="mRNA"/>
</dbReference>
<dbReference type="CCDS" id="CCDS49246.1"/>
<dbReference type="RefSeq" id="NP_001129049.1">
    <property type="nucleotide sequence ID" value="NM_001135577.2"/>
</dbReference>
<dbReference type="SMR" id="E9Q942"/>
<dbReference type="FunCoup" id="E9Q942">
    <property type="interactions" value="32"/>
</dbReference>
<dbReference type="STRING" id="10090.ENSMUSP00000130956"/>
<dbReference type="iPTMnet" id="E9Q942"/>
<dbReference type="PhosphoSitePlus" id="E9Q942"/>
<dbReference type="jPOST" id="E9Q942"/>
<dbReference type="PaxDb" id="10090-ENSMUSP00000130956"/>
<dbReference type="PeptideAtlas" id="E9Q942"/>
<dbReference type="ProteomicsDB" id="261044"/>
<dbReference type="Antibodypedia" id="74351">
    <property type="antibodies" value="5 antibodies from 5 providers"/>
</dbReference>
<dbReference type="Ensembl" id="ENSMUST00000165561.4">
    <property type="protein sequence ID" value="ENSMUSP00000130956.3"/>
    <property type="gene ID" value="ENSMUSG00000091264.4"/>
</dbReference>
<dbReference type="GeneID" id="108934"/>
<dbReference type="KEGG" id="mmu:108934"/>
<dbReference type="UCSC" id="uc007qfc.2">
    <property type="organism name" value="mouse"/>
</dbReference>
<dbReference type="AGR" id="MGI:2652854"/>
<dbReference type="CTD" id="221710"/>
<dbReference type="MGI" id="MGI:2652854">
    <property type="gene designation" value="Smim13"/>
</dbReference>
<dbReference type="VEuPathDB" id="HostDB:ENSMUSG00000091264"/>
<dbReference type="eggNOG" id="ENOG502S5IU">
    <property type="taxonomic scope" value="Eukaryota"/>
</dbReference>
<dbReference type="GeneTree" id="ENSGT00560000078630"/>
<dbReference type="HOGENOM" id="CLU_190096_0_0_1"/>
<dbReference type="InParanoid" id="E9Q942"/>
<dbReference type="OMA" id="ACVLLFM"/>
<dbReference type="OrthoDB" id="25586at2759"/>
<dbReference type="PhylomeDB" id="E9Q942"/>
<dbReference type="BioGRID-ORCS" id="108934">
    <property type="hits" value="3 hits in 76 CRISPR screens"/>
</dbReference>
<dbReference type="ChiTaRS" id="Smim13">
    <property type="organism name" value="mouse"/>
</dbReference>
<dbReference type="PRO" id="PR:E9Q942"/>
<dbReference type="Proteomes" id="UP000000589">
    <property type="component" value="Chromosome 13"/>
</dbReference>
<dbReference type="RNAct" id="E9Q942">
    <property type="molecule type" value="protein"/>
</dbReference>
<dbReference type="Bgee" id="ENSMUSG00000091264">
    <property type="expression patterns" value="Expressed in CA1 field of hippocampus and 221 other cell types or tissues"/>
</dbReference>
<dbReference type="GO" id="GO:0016020">
    <property type="term" value="C:membrane"/>
    <property type="evidence" value="ECO:0007669"/>
    <property type="project" value="UniProtKB-SubCell"/>
</dbReference>
<dbReference type="InterPro" id="IPR031851">
    <property type="entry name" value="DUF4750"/>
</dbReference>
<dbReference type="PANTHER" id="PTHR36877">
    <property type="entry name" value="SMALL INTEGRAL MEMBRANE PROTEIN 13"/>
    <property type="match status" value="1"/>
</dbReference>
<dbReference type="PANTHER" id="PTHR36877:SF1">
    <property type="entry name" value="SMALL INTEGRAL MEMBRANE PROTEIN 13"/>
    <property type="match status" value="1"/>
</dbReference>
<dbReference type="Pfam" id="PF15938">
    <property type="entry name" value="DUF4750"/>
    <property type="match status" value="1"/>
</dbReference>
<name>SIM13_MOUSE</name>
<feature type="chain" id="PRO_0000414061" description="Small integral membrane protein 13">
    <location>
        <begin position="1"/>
        <end position="88"/>
    </location>
</feature>
<feature type="transmembrane region" description="Helical" evidence="1">
    <location>
        <begin position="10"/>
        <end position="30"/>
    </location>
</feature>
<feature type="region of interest" description="Disordered" evidence="2">
    <location>
        <begin position="48"/>
        <end position="88"/>
    </location>
</feature>
<feature type="compositionally biased region" description="Polar residues" evidence="2">
    <location>
        <begin position="48"/>
        <end position="61"/>
    </location>
</feature>
<feature type="modified residue" description="Phosphoserine" evidence="4">
    <location>
        <position position="59"/>
    </location>
</feature>
<feature type="modified residue" description="Phosphoserine" evidence="4">
    <location>
        <position position="61"/>
    </location>
</feature>
<feature type="modified residue" description="Phosphothreonine" evidence="4">
    <location>
        <position position="63"/>
    </location>
</feature>
<feature type="modified residue" description="Phosphoserine" evidence="4">
    <location>
        <position position="70"/>
    </location>
</feature>
<proteinExistence type="evidence at protein level"/>
<accession>E9Q942</accession>
<organism>
    <name type="scientific">Mus musculus</name>
    <name type="common">Mouse</name>
    <dbReference type="NCBI Taxonomy" id="10090"/>
    <lineage>
        <taxon>Eukaryota</taxon>
        <taxon>Metazoa</taxon>
        <taxon>Chordata</taxon>
        <taxon>Craniata</taxon>
        <taxon>Vertebrata</taxon>
        <taxon>Euteleostomi</taxon>
        <taxon>Mammalia</taxon>
        <taxon>Eutheria</taxon>
        <taxon>Euarchontoglires</taxon>
        <taxon>Glires</taxon>
        <taxon>Rodentia</taxon>
        <taxon>Myomorpha</taxon>
        <taxon>Muroidea</taxon>
        <taxon>Muridae</taxon>
        <taxon>Murinae</taxon>
        <taxon>Mus</taxon>
        <taxon>Mus</taxon>
    </lineage>
</organism>
<keyword id="KW-0472">Membrane</keyword>
<keyword id="KW-0597">Phosphoprotein</keyword>
<keyword id="KW-1185">Reference proteome</keyword>
<keyword id="KW-0812">Transmembrane</keyword>
<keyword id="KW-1133">Transmembrane helix</keyword>
<reference key="1">
    <citation type="journal article" date="2005" name="Science">
        <title>The transcriptional landscape of the mammalian genome.</title>
        <authorList>
            <person name="Carninci P."/>
            <person name="Kasukawa T."/>
            <person name="Katayama S."/>
            <person name="Gough J."/>
            <person name="Frith M.C."/>
            <person name="Maeda N."/>
            <person name="Oyama R."/>
            <person name="Ravasi T."/>
            <person name="Lenhard B."/>
            <person name="Wells C."/>
            <person name="Kodzius R."/>
            <person name="Shimokawa K."/>
            <person name="Bajic V.B."/>
            <person name="Brenner S.E."/>
            <person name="Batalov S."/>
            <person name="Forrest A.R."/>
            <person name="Zavolan M."/>
            <person name="Davis M.J."/>
            <person name="Wilming L.G."/>
            <person name="Aidinis V."/>
            <person name="Allen J.E."/>
            <person name="Ambesi-Impiombato A."/>
            <person name="Apweiler R."/>
            <person name="Aturaliya R.N."/>
            <person name="Bailey T.L."/>
            <person name="Bansal M."/>
            <person name="Baxter L."/>
            <person name="Beisel K.W."/>
            <person name="Bersano T."/>
            <person name="Bono H."/>
            <person name="Chalk A.M."/>
            <person name="Chiu K.P."/>
            <person name="Choudhary V."/>
            <person name="Christoffels A."/>
            <person name="Clutterbuck D.R."/>
            <person name="Crowe M.L."/>
            <person name="Dalla E."/>
            <person name="Dalrymple B.P."/>
            <person name="de Bono B."/>
            <person name="Della Gatta G."/>
            <person name="di Bernardo D."/>
            <person name="Down T."/>
            <person name="Engstrom P."/>
            <person name="Fagiolini M."/>
            <person name="Faulkner G."/>
            <person name="Fletcher C.F."/>
            <person name="Fukushima T."/>
            <person name="Furuno M."/>
            <person name="Futaki S."/>
            <person name="Gariboldi M."/>
            <person name="Georgii-Hemming P."/>
            <person name="Gingeras T.R."/>
            <person name="Gojobori T."/>
            <person name="Green R.E."/>
            <person name="Gustincich S."/>
            <person name="Harbers M."/>
            <person name="Hayashi Y."/>
            <person name="Hensch T.K."/>
            <person name="Hirokawa N."/>
            <person name="Hill D."/>
            <person name="Huminiecki L."/>
            <person name="Iacono M."/>
            <person name="Ikeo K."/>
            <person name="Iwama A."/>
            <person name="Ishikawa T."/>
            <person name="Jakt M."/>
            <person name="Kanapin A."/>
            <person name="Katoh M."/>
            <person name="Kawasawa Y."/>
            <person name="Kelso J."/>
            <person name="Kitamura H."/>
            <person name="Kitano H."/>
            <person name="Kollias G."/>
            <person name="Krishnan S.P."/>
            <person name="Kruger A."/>
            <person name="Kummerfeld S.K."/>
            <person name="Kurochkin I.V."/>
            <person name="Lareau L.F."/>
            <person name="Lazarevic D."/>
            <person name="Lipovich L."/>
            <person name="Liu J."/>
            <person name="Liuni S."/>
            <person name="McWilliam S."/>
            <person name="Madan Babu M."/>
            <person name="Madera M."/>
            <person name="Marchionni L."/>
            <person name="Matsuda H."/>
            <person name="Matsuzawa S."/>
            <person name="Miki H."/>
            <person name="Mignone F."/>
            <person name="Miyake S."/>
            <person name="Morris K."/>
            <person name="Mottagui-Tabar S."/>
            <person name="Mulder N."/>
            <person name="Nakano N."/>
            <person name="Nakauchi H."/>
            <person name="Ng P."/>
            <person name="Nilsson R."/>
            <person name="Nishiguchi S."/>
            <person name="Nishikawa S."/>
            <person name="Nori F."/>
            <person name="Ohara O."/>
            <person name="Okazaki Y."/>
            <person name="Orlando V."/>
            <person name="Pang K.C."/>
            <person name="Pavan W.J."/>
            <person name="Pavesi G."/>
            <person name="Pesole G."/>
            <person name="Petrovsky N."/>
            <person name="Piazza S."/>
            <person name="Reed J."/>
            <person name="Reid J.F."/>
            <person name="Ring B.Z."/>
            <person name="Ringwald M."/>
            <person name="Rost B."/>
            <person name="Ruan Y."/>
            <person name="Salzberg S.L."/>
            <person name="Sandelin A."/>
            <person name="Schneider C."/>
            <person name="Schoenbach C."/>
            <person name="Sekiguchi K."/>
            <person name="Semple C.A."/>
            <person name="Seno S."/>
            <person name="Sessa L."/>
            <person name="Sheng Y."/>
            <person name="Shibata Y."/>
            <person name="Shimada H."/>
            <person name="Shimada K."/>
            <person name="Silva D."/>
            <person name="Sinclair B."/>
            <person name="Sperling S."/>
            <person name="Stupka E."/>
            <person name="Sugiura K."/>
            <person name="Sultana R."/>
            <person name="Takenaka Y."/>
            <person name="Taki K."/>
            <person name="Tammoja K."/>
            <person name="Tan S.L."/>
            <person name="Tang S."/>
            <person name="Taylor M.S."/>
            <person name="Tegner J."/>
            <person name="Teichmann S.A."/>
            <person name="Ueda H.R."/>
            <person name="van Nimwegen E."/>
            <person name="Verardo R."/>
            <person name="Wei C.L."/>
            <person name="Yagi K."/>
            <person name="Yamanishi H."/>
            <person name="Zabarovsky E."/>
            <person name="Zhu S."/>
            <person name="Zimmer A."/>
            <person name="Hide W."/>
            <person name="Bult C."/>
            <person name="Grimmond S.M."/>
            <person name="Teasdale R.D."/>
            <person name="Liu E.T."/>
            <person name="Brusic V."/>
            <person name="Quackenbush J."/>
            <person name="Wahlestedt C."/>
            <person name="Mattick J.S."/>
            <person name="Hume D.A."/>
            <person name="Kai C."/>
            <person name="Sasaki D."/>
            <person name="Tomaru Y."/>
            <person name="Fukuda S."/>
            <person name="Kanamori-Katayama M."/>
            <person name="Suzuki M."/>
            <person name="Aoki J."/>
            <person name="Arakawa T."/>
            <person name="Iida J."/>
            <person name="Imamura K."/>
            <person name="Itoh M."/>
            <person name="Kato T."/>
            <person name="Kawaji H."/>
            <person name="Kawagashira N."/>
            <person name="Kawashima T."/>
            <person name="Kojima M."/>
            <person name="Kondo S."/>
            <person name="Konno H."/>
            <person name="Nakano K."/>
            <person name="Ninomiya N."/>
            <person name="Nishio T."/>
            <person name="Okada M."/>
            <person name="Plessy C."/>
            <person name="Shibata K."/>
            <person name="Shiraki T."/>
            <person name="Suzuki S."/>
            <person name="Tagami M."/>
            <person name="Waki K."/>
            <person name="Watahiki A."/>
            <person name="Okamura-Oho Y."/>
            <person name="Suzuki H."/>
            <person name="Kawai J."/>
            <person name="Hayashizaki Y."/>
        </authorList>
    </citation>
    <scope>NUCLEOTIDE SEQUENCE [LARGE SCALE MRNA]</scope>
    <source>
        <strain>C57BL/6J</strain>
        <tissue>Pituitary</tissue>
    </source>
</reference>
<reference key="2">
    <citation type="journal article" date="2009" name="PLoS Biol.">
        <title>Lineage-specific biology revealed by a finished genome assembly of the mouse.</title>
        <authorList>
            <person name="Church D.M."/>
            <person name="Goodstadt L."/>
            <person name="Hillier L.W."/>
            <person name="Zody M.C."/>
            <person name="Goldstein S."/>
            <person name="She X."/>
            <person name="Bult C.J."/>
            <person name="Agarwala R."/>
            <person name="Cherry J.L."/>
            <person name="DiCuccio M."/>
            <person name="Hlavina W."/>
            <person name="Kapustin Y."/>
            <person name="Meric P."/>
            <person name="Maglott D."/>
            <person name="Birtle Z."/>
            <person name="Marques A.C."/>
            <person name="Graves T."/>
            <person name="Zhou S."/>
            <person name="Teague B."/>
            <person name="Potamousis K."/>
            <person name="Churas C."/>
            <person name="Place M."/>
            <person name="Herschleb J."/>
            <person name="Runnheim R."/>
            <person name="Forrest D."/>
            <person name="Amos-Landgraf J."/>
            <person name="Schwartz D.C."/>
            <person name="Cheng Z."/>
            <person name="Lindblad-Toh K."/>
            <person name="Eichler E.E."/>
            <person name="Ponting C.P."/>
        </authorList>
    </citation>
    <scope>NUCLEOTIDE SEQUENCE [LARGE SCALE GENOMIC DNA]</scope>
    <source>
        <strain>C57BL/6J</strain>
    </source>
</reference>
<reference key="3">
    <citation type="journal article" date="2004" name="Genome Res.">
        <title>The status, quality, and expansion of the NIH full-length cDNA project: the Mammalian Gene Collection (MGC).</title>
        <authorList>
            <consortium name="The MGC Project Team"/>
        </authorList>
    </citation>
    <scope>NUCLEOTIDE SEQUENCE [LARGE SCALE MRNA]</scope>
    <source>
        <strain>Czech II</strain>
        <strain>FVB/N-3</strain>
        <tissue>Mammary tumor</tissue>
    </source>
</reference>
<reference key="4">
    <citation type="journal article" date="2010" name="Cell">
        <title>A tissue-specific atlas of mouse protein phosphorylation and expression.</title>
        <authorList>
            <person name="Huttlin E.L."/>
            <person name="Jedrychowski M.P."/>
            <person name="Elias J.E."/>
            <person name="Goswami T."/>
            <person name="Rad R."/>
            <person name="Beausoleil S.A."/>
            <person name="Villen J."/>
            <person name="Haas W."/>
            <person name="Sowa M.E."/>
            <person name="Gygi S.P."/>
        </authorList>
    </citation>
    <scope>PHOSPHORYLATION [LARGE SCALE ANALYSIS] AT SER-59; SER-61; THR-63 AND SER-70</scope>
    <scope>IDENTIFICATION BY MASS SPECTROMETRY [LARGE SCALE ANALYSIS]</scope>
    <source>
        <tissue>Brain</tissue>
        <tissue>Kidney</tissue>
        <tissue>Liver</tissue>
        <tissue>Lung</tissue>
        <tissue>Pancreas</tissue>
        <tissue>Spleen</tissue>
        <tissue>Testis</tissue>
    </source>
</reference>
<comment type="subcellular location">
    <subcellularLocation>
        <location evidence="3">Membrane</location>
        <topology evidence="3">Single-pass membrane protein</topology>
    </subcellularLocation>
</comment>
<comment type="similarity">
    <text evidence="3">Belongs to the SMIM13 family.</text>
</comment>
<sequence>MWHNVGLTLLVFVATLLIVLLLMVCGWYFVWHLFLSKFKFLRELVGDTGSQEGDNEQPSGSETEEDPSASPQKIRSARQRRPPVDAGH</sequence>
<protein>
    <recommendedName>
        <fullName>Small integral membrane protein 13</fullName>
    </recommendedName>
</protein>
<gene>
    <name type="primary">Smim13</name>
</gene>